<name>INLPA_MYCMM</name>
<organism>
    <name type="scientific">Mycobacterium marinum (strain ATCC BAA-535 / M)</name>
    <dbReference type="NCBI Taxonomy" id="216594"/>
    <lineage>
        <taxon>Bacteria</taxon>
        <taxon>Bacillati</taxon>
        <taxon>Actinomycetota</taxon>
        <taxon>Actinomycetes</taxon>
        <taxon>Mycobacteriales</taxon>
        <taxon>Mycobacteriaceae</taxon>
        <taxon>Mycobacterium</taxon>
        <taxon>Mycobacterium ulcerans group</taxon>
    </lineage>
</organism>
<feature type="chain" id="PRO_0000458121" description="Isonitrile lipopeptide synthase">
    <location>
        <begin position="1"/>
        <end position="1416"/>
    </location>
</feature>
<feature type="domain" description="Carrier" evidence="1">
    <location>
        <begin position="965"/>
        <end position="1028"/>
    </location>
</feature>
<feature type="coiled-coil region" evidence="2">
    <location>
        <begin position="188"/>
        <end position="215"/>
    </location>
</feature>
<feature type="modified residue" description="O-(pantetheine 4'-phosphoryl)serine" evidence="1">
    <location>
        <position position="988"/>
    </location>
</feature>
<evidence type="ECO:0000250" key="1">
    <source>
        <dbReference type="UniProtKB" id="P0DX16"/>
    </source>
</evidence>
<evidence type="ECO:0000255" key="2"/>
<evidence type="ECO:0000269" key="3">
    <source>
    </source>
</evidence>
<evidence type="ECO:0000303" key="4">
    <source>
    </source>
</evidence>
<evidence type="ECO:0000305" key="5"/>
<evidence type="ECO:0000305" key="6">
    <source>
    </source>
</evidence>
<evidence type="ECO:0000312" key="7">
    <source>
        <dbReference type="EMBL" id="ACC38724.1"/>
    </source>
</evidence>
<comment type="function">
    <text evidence="3">Nonribosomal peptide synthetase (NRPS) involved in the biosynthesis of a unique class of isonitrile lipopeptides (INLPs) that seem to play a role in metal acquisition in M.marinum. Catalyzes the final step in the pathway, i.e. the condensation of a (3R)-3-isocyanyl-fatty acyl-[ACP] to both amino groups of a lysine, producing isonitrile lipopeptides.</text>
</comment>
<comment type="catalytic activity">
    <reaction evidence="1 6">
        <text>2 a (3R)-3-isocyanyl-fatty acyl-[ACP] + L-lysine + ATP + 2 NADPH = an isonitrile lipopeptide + 2 holo-[ACP] + AMP + diphosphate + 2 NADP(+)</text>
        <dbReference type="Rhea" id="RHEA:75551"/>
        <dbReference type="Rhea" id="RHEA-COMP:9685"/>
        <dbReference type="Rhea" id="RHEA-COMP:18454"/>
        <dbReference type="ChEBI" id="CHEBI:30616"/>
        <dbReference type="ChEBI" id="CHEBI:32551"/>
        <dbReference type="ChEBI" id="CHEBI:33019"/>
        <dbReference type="ChEBI" id="CHEBI:57783"/>
        <dbReference type="ChEBI" id="CHEBI:58349"/>
        <dbReference type="ChEBI" id="CHEBI:64479"/>
        <dbReference type="ChEBI" id="CHEBI:194105"/>
        <dbReference type="ChEBI" id="CHEBI:194107"/>
        <dbReference type="ChEBI" id="CHEBI:456215"/>
    </reaction>
    <physiologicalReaction direction="left-to-right" evidence="1 6">
        <dbReference type="Rhea" id="RHEA:75552"/>
    </physiologicalReaction>
</comment>
<comment type="cofactor">
    <cofactor evidence="1">
        <name>pantetheine 4'-phosphate</name>
        <dbReference type="ChEBI" id="CHEBI:47942"/>
    </cofactor>
</comment>
<comment type="domain">
    <text evidence="6">Contains 4 domains: a C (condensation) domain, an A (adenylation) domain, a T (thiolation) domain, and an R (reduction) domain. The T domain acts as a lyine-specific peptidyl-carrier protein, and carries a lyine residue that is transferred to it by the A domain. The C domain catalyzes the condensation of two isonitrile-containing moieties to both amino groups of the lysine bound to the T domain, a rare activity in nonribosomal peptide biosynthesis. Finally, the R domain catalyzes a four-electron thioester reduction, releasing the product from the NRPS and forming a terminal alcohol product.</text>
</comment>
<comment type="disruption phenotype">
    <text evidence="3">Deletion of the gene cluster mmaABCDE causes a significant decrease in the intracellular accumulation of zinc in Sauton's medium where metal concentrations are relatively low.</text>
</comment>
<comment type="similarity">
    <text evidence="5">Belongs to the ATP-dependent AMP-binding enzyme family.</text>
</comment>
<sequence>MTAPEIGCAEAIPLSKSQQNLYNGVLQDNDPALYLIGKRYRFHPLALSNFLAALEASVLNNPVQLCVLQMAATDADYPQLVPRLQFSDLVLVRSAAQGQPDGPGADLEHTWSSGILDRPLVRYTVSTDEGGNVCGLDVHTHHILLDGGATGIIEADLAHFLAASLEPAGVGQMPTLSQGLAKLAAAHLRETAKVAEALRRQADAVQRELTAEAGQGGGAQGASGTSGAAAKGVLQESIALCGPAYDALRALSEAQQVPLNVLVAAAAVAVQAGLRQSTESLLVHAVDNRFGDPELNVATCLVNSVAHALRFRPFASVREVVRDLDRGYVKAVRRRWIREEHYRRMYLAINRTSHVQALTLNFIRESCAPGLRPFLSEAPVATEIGPIEGTTVACVLDEQRHTLNLAIWDRADLPERNTGAGVAARIGAALESMAALWDQPIAMTANEWFEVGADGLPCRTEAAGRPRPPSAPAWFVDAAPGLRQFLDRRRHVYPWVGWLVCHGVVPGDVLVCTDDDTDKTVDLLLACHLAGCGYSMCESVDDLSLRATTIGEHCEGSSAHPVDVAAVRLGAVPDHALRERIDQRLDQVARDPLLATKAAYIMPTSGTTGQPKLVRISHGSLAAFCAAIGPSYGWNSRDTILQCAPLTSDISVEEIFGAAVCGAELVRSAAMKTGDLGGLARDIHALGPTVVDLPTAVWHLLCEDGDAVDVIGRSRLRQIVIGGESIRTSTVDKWVNSPVLAPISLVSSYGPTEATVVATHLPIVYDGIAAAAHTRLRVGLPMAPNTVFIAFGEVVIAGPLVSDGYLGIDDSSFGAVAPGDGSQLRAFATADRVTIDEEGFPVFAGRKDTIVKVAGKRVDTAAVARRISADPTVCDVAVEPHDGRLGVWFETERTREAAEDGATAGRIGLTLASLGVPAFFVVAVPSIPRKPNGKVDGARLHTLPQLADAVPSDAEAGESAAGLARVWSRHLGRPLAADSSLLGAGIGSLDLIRILPDTRRYLGRHLSVLELISADTAANLVCDLGSNPAAPATDGWLDAETAAAIERDLVSLGSQCTPQPLGAKPPPHDRAAAPIVVLGASGIVGTGFARAVLERKQAGLACPEIVLASRSKPPEHGPWSALRGLEGIRIEQLGATLGAADLDALICDTGARSLINCIGNTNVLVPYRGLRAANVELVSTVAQVCAQRDVRLVHLSTFVISADVTAPRVTDPRMSPYPYAASKSLAELIVAASSPALDFTIVRLPRVLGEDYQLRESADILVSVVDACMALRAFPTLTLTEEVTTGRAAAQAILGLLPQFSGAAGLGHGITVVRGAAVQYRELLSGYALDEIDAAEWKHRLDQSDWARRNPQRWSVVDAWVSLGMRLGARSYSQYLAGYPSIPLQVGTVAEIAAPPTALRALLEQGCAQPPRPALA</sequence>
<keyword id="KW-0067">ATP-binding</keyword>
<keyword id="KW-0175">Coiled coil</keyword>
<keyword id="KW-0436">Ligase</keyword>
<keyword id="KW-0547">Nucleotide-binding</keyword>
<keyword id="KW-0596">Phosphopantetheine</keyword>
<keyword id="KW-0597">Phosphoprotein</keyword>
<keyword id="KW-1185">Reference proteome</keyword>
<keyword id="KW-0808">Transferase</keyword>
<reference key="1">
    <citation type="journal article" date="2008" name="Genome Res.">
        <title>Insights from the complete genome sequence of Mycobacterium marinum on the evolution of Mycobacterium tuberculosis.</title>
        <authorList>
            <person name="Stinear T.P."/>
            <person name="Seemann T."/>
            <person name="Harrison P.F."/>
            <person name="Jenkin G.A."/>
            <person name="Davies J.K."/>
            <person name="Johnson P.D."/>
            <person name="Abdellah Z."/>
            <person name="Arrowsmith C."/>
            <person name="Chillingworth T."/>
            <person name="Churcher C."/>
            <person name="Clarke K."/>
            <person name="Cronin A."/>
            <person name="Davis P."/>
            <person name="Goodhead I."/>
            <person name="Holroyd N."/>
            <person name="Jagels K."/>
            <person name="Lord A."/>
            <person name="Moule S."/>
            <person name="Mungall K."/>
            <person name="Norbertczak H."/>
            <person name="Quail M.A."/>
            <person name="Rabbinowitsch E."/>
            <person name="Walker D."/>
            <person name="White B."/>
            <person name="Whitehead S."/>
            <person name="Small P.L."/>
            <person name="Brosch R."/>
            <person name="Ramakrishnan L."/>
            <person name="Fischbach M.A."/>
            <person name="Parkhill J."/>
            <person name="Cole S.T."/>
        </authorList>
    </citation>
    <scope>NUCLEOTIDE SEQUENCE [LARGE SCALE GENOMIC DNA]</scope>
    <source>
        <strain>ATCC BAA-535 / M</strain>
    </source>
</reference>
<reference key="2">
    <citation type="journal article" date="2017" name="Proc. Natl. Acad. Sci. U.S.A.">
        <title>Biosynthesis of isonitrile lipopeptides by conserved nonribosomal peptide synthetase gene clusters in Actinobacteria.</title>
        <authorList>
            <person name="Harris N.C."/>
            <person name="Sato M."/>
            <person name="Herman N.A."/>
            <person name="Twigg F."/>
            <person name="Cai W."/>
            <person name="Liu J."/>
            <person name="Zhu X."/>
            <person name="Downey J."/>
            <person name="Khalaf R."/>
            <person name="Martin J."/>
            <person name="Koshino H."/>
            <person name="Zhang W."/>
        </authorList>
    </citation>
    <scope>FUNCTION</scope>
    <scope>DOMAIN</scope>
    <scope>DISRUPTION PHENOTYPE</scope>
    <source>
        <strain>ATCC BAA-535 / M</strain>
    </source>
</reference>
<protein>
    <recommendedName>
        <fullName evidence="6">Isonitrile lipopeptide synthase</fullName>
        <ecNumber evidence="1">2.3.1.-</ecNumber>
        <ecNumber evidence="3">6.2.1.-</ecNumber>
    </recommendedName>
</protein>
<accession>B2HKL9</accession>
<gene>
    <name evidence="4" type="primary">mmaA</name>
    <name evidence="7" type="ordered locus">MMAR_0256</name>
</gene>
<dbReference type="EC" id="2.3.1.-" evidence="1"/>
<dbReference type="EC" id="6.2.1.-" evidence="3"/>
<dbReference type="EMBL" id="CP000854">
    <property type="protein sequence ID" value="ACC38724.1"/>
    <property type="molecule type" value="Genomic_DNA"/>
</dbReference>
<dbReference type="RefSeq" id="WP_012392250.1">
    <property type="nucleotide sequence ID" value="NC_010612.1"/>
</dbReference>
<dbReference type="SMR" id="B2HKL9"/>
<dbReference type="STRING" id="216594.MMAR_0256"/>
<dbReference type="KEGG" id="mmi:MMAR_0256"/>
<dbReference type="eggNOG" id="COG0451">
    <property type="taxonomic scope" value="Bacteria"/>
</dbReference>
<dbReference type="eggNOG" id="COG1020">
    <property type="taxonomic scope" value="Bacteria"/>
</dbReference>
<dbReference type="HOGENOM" id="CLU_255245_0_0_11"/>
<dbReference type="OrthoDB" id="2472181at2"/>
<dbReference type="Proteomes" id="UP000001190">
    <property type="component" value="Chromosome"/>
</dbReference>
<dbReference type="GO" id="GO:0005829">
    <property type="term" value="C:cytosol"/>
    <property type="evidence" value="ECO:0007669"/>
    <property type="project" value="TreeGrafter"/>
</dbReference>
<dbReference type="GO" id="GO:0005524">
    <property type="term" value="F:ATP binding"/>
    <property type="evidence" value="ECO:0007669"/>
    <property type="project" value="UniProtKB-KW"/>
</dbReference>
<dbReference type="GO" id="GO:0016874">
    <property type="term" value="F:ligase activity"/>
    <property type="evidence" value="ECO:0007669"/>
    <property type="project" value="UniProtKB-KW"/>
</dbReference>
<dbReference type="GO" id="GO:0031177">
    <property type="term" value="F:phosphopantetheine binding"/>
    <property type="evidence" value="ECO:0007669"/>
    <property type="project" value="TreeGrafter"/>
</dbReference>
<dbReference type="GO" id="GO:0016740">
    <property type="term" value="F:transferase activity"/>
    <property type="evidence" value="ECO:0007669"/>
    <property type="project" value="UniProtKB-KW"/>
</dbReference>
<dbReference type="GO" id="GO:0043041">
    <property type="term" value="P:amino acid activation for nonribosomal peptide biosynthetic process"/>
    <property type="evidence" value="ECO:0007669"/>
    <property type="project" value="TreeGrafter"/>
</dbReference>
<dbReference type="GO" id="GO:0044550">
    <property type="term" value="P:secondary metabolite biosynthetic process"/>
    <property type="evidence" value="ECO:0007669"/>
    <property type="project" value="TreeGrafter"/>
</dbReference>
<dbReference type="Gene3D" id="3.30.300.30">
    <property type="match status" value="1"/>
</dbReference>
<dbReference type="Gene3D" id="3.30.559.10">
    <property type="entry name" value="Chloramphenicol acetyltransferase-like domain"/>
    <property type="match status" value="1"/>
</dbReference>
<dbReference type="Gene3D" id="3.40.50.12780">
    <property type="entry name" value="N-terminal domain of ligase-like"/>
    <property type="match status" value="1"/>
</dbReference>
<dbReference type="Gene3D" id="3.40.50.720">
    <property type="entry name" value="NAD(P)-binding Rossmann-like Domain"/>
    <property type="match status" value="1"/>
</dbReference>
<dbReference type="Gene3D" id="3.30.559.30">
    <property type="entry name" value="Nonribosomal peptide synthetase, condensation domain"/>
    <property type="match status" value="1"/>
</dbReference>
<dbReference type="InterPro" id="IPR045851">
    <property type="entry name" value="AMP-bd_C_sf"/>
</dbReference>
<dbReference type="InterPro" id="IPR020845">
    <property type="entry name" value="AMP-binding_CS"/>
</dbReference>
<dbReference type="InterPro" id="IPR000873">
    <property type="entry name" value="AMP-dep_synth/lig_dom"/>
</dbReference>
<dbReference type="InterPro" id="IPR042099">
    <property type="entry name" value="ANL_N_sf"/>
</dbReference>
<dbReference type="InterPro" id="IPR023213">
    <property type="entry name" value="CAT-like_dom_sf"/>
</dbReference>
<dbReference type="InterPro" id="IPR001509">
    <property type="entry name" value="Epimerase_deHydtase"/>
</dbReference>
<dbReference type="InterPro" id="IPR036291">
    <property type="entry name" value="NAD(P)-bd_dom_sf"/>
</dbReference>
<dbReference type="PANTHER" id="PTHR45527:SF1">
    <property type="entry name" value="FATTY ACID SYNTHASE"/>
    <property type="match status" value="1"/>
</dbReference>
<dbReference type="PANTHER" id="PTHR45527">
    <property type="entry name" value="NONRIBOSOMAL PEPTIDE SYNTHETASE"/>
    <property type="match status" value="1"/>
</dbReference>
<dbReference type="Pfam" id="PF00501">
    <property type="entry name" value="AMP-binding"/>
    <property type="match status" value="1"/>
</dbReference>
<dbReference type="Pfam" id="PF01370">
    <property type="entry name" value="Epimerase"/>
    <property type="match status" value="1"/>
</dbReference>
<dbReference type="SUPFAM" id="SSF56801">
    <property type="entry name" value="Acetyl-CoA synthetase-like"/>
    <property type="match status" value="1"/>
</dbReference>
<dbReference type="SUPFAM" id="SSF52777">
    <property type="entry name" value="CoA-dependent acyltransferases"/>
    <property type="match status" value="2"/>
</dbReference>
<dbReference type="SUPFAM" id="SSF51735">
    <property type="entry name" value="NAD(P)-binding Rossmann-fold domains"/>
    <property type="match status" value="1"/>
</dbReference>
<dbReference type="PROSITE" id="PS00455">
    <property type="entry name" value="AMP_BINDING"/>
    <property type="match status" value="1"/>
</dbReference>
<proteinExistence type="inferred from homology"/>